<keyword id="KW-0066">ATP synthesis</keyword>
<keyword id="KW-0997">Cell inner membrane</keyword>
<keyword id="KW-1003">Cell membrane</keyword>
<keyword id="KW-0139">CF(1)</keyword>
<keyword id="KW-0375">Hydrogen ion transport</keyword>
<keyword id="KW-0406">Ion transport</keyword>
<keyword id="KW-0472">Membrane</keyword>
<keyword id="KW-1185">Reference proteome</keyword>
<keyword id="KW-0813">Transport</keyword>
<name>ATPE_NITSB</name>
<dbReference type="EMBL" id="AP009178">
    <property type="protein sequence ID" value="BAF70328.1"/>
    <property type="molecule type" value="Genomic_DNA"/>
</dbReference>
<dbReference type="RefSeq" id="WP_012082591.1">
    <property type="nucleotide sequence ID" value="NC_009662.1"/>
</dbReference>
<dbReference type="SMR" id="A6Q4B9"/>
<dbReference type="FunCoup" id="A6Q4B9">
    <property type="interactions" value="321"/>
</dbReference>
<dbReference type="STRING" id="387092.NIS_1219"/>
<dbReference type="KEGG" id="nis:NIS_1219"/>
<dbReference type="eggNOG" id="COG0355">
    <property type="taxonomic scope" value="Bacteria"/>
</dbReference>
<dbReference type="HOGENOM" id="CLU_084338_2_1_7"/>
<dbReference type="InParanoid" id="A6Q4B9"/>
<dbReference type="OrthoDB" id="9799969at2"/>
<dbReference type="Proteomes" id="UP000001118">
    <property type="component" value="Chromosome"/>
</dbReference>
<dbReference type="GO" id="GO:0005886">
    <property type="term" value="C:plasma membrane"/>
    <property type="evidence" value="ECO:0007669"/>
    <property type="project" value="UniProtKB-SubCell"/>
</dbReference>
<dbReference type="GO" id="GO:0045259">
    <property type="term" value="C:proton-transporting ATP synthase complex"/>
    <property type="evidence" value="ECO:0007669"/>
    <property type="project" value="UniProtKB-KW"/>
</dbReference>
<dbReference type="GO" id="GO:0005524">
    <property type="term" value="F:ATP binding"/>
    <property type="evidence" value="ECO:0007669"/>
    <property type="project" value="UniProtKB-UniRule"/>
</dbReference>
<dbReference type="GO" id="GO:0046933">
    <property type="term" value="F:proton-transporting ATP synthase activity, rotational mechanism"/>
    <property type="evidence" value="ECO:0007669"/>
    <property type="project" value="UniProtKB-UniRule"/>
</dbReference>
<dbReference type="CDD" id="cd12152">
    <property type="entry name" value="F1-ATPase_delta"/>
    <property type="match status" value="1"/>
</dbReference>
<dbReference type="Gene3D" id="2.60.15.10">
    <property type="entry name" value="F0F1 ATP synthase delta/epsilon subunit, N-terminal"/>
    <property type="match status" value="1"/>
</dbReference>
<dbReference type="HAMAP" id="MF_00530">
    <property type="entry name" value="ATP_synth_epsil_bac"/>
    <property type="match status" value="1"/>
</dbReference>
<dbReference type="InterPro" id="IPR001469">
    <property type="entry name" value="ATP_synth_F1_dsu/esu"/>
</dbReference>
<dbReference type="InterPro" id="IPR020546">
    <property type="entry name" value="ATP_synth_F1_dsu/esu_N"/>
</dbReference>
<dbReference type="InterPro" id="IPR036771">
    <property type="entry name" value="ATPsynth_dsu/esu_N"/>
</dbReference>
<dbReference type="NCBIfam" id="TIGR01216">
    <property type="entry name" value="ATP_synt_epsi"/>
    <property type="match status" value="1"/>
</dbReference>
<dbReference type="PANTHER" id="PTHR13822">
    <property type="entry name" value="ATP SYNTHASE DELTA/EPSILON CHAIN"/>
    <property type="match status" value="1"/>
</dbReference>
<dbReference type="PANTHER" id="PTHR13822:SF10">
    <property type="entry name" value="ATP SYNTHASE EPSILON CHAIN, CHLOROPLASTIC"/>
    <property type="match status" value="1"/>
</dbReference>
<dbReference type="Pfam" id="PF02823">
    <property type="entry name" value="ATP-synt_DE_N"/>
    <property type="match status" value="1"/>
</dbReference>
<dbReference type="SUPFAM" id="SSF51344">
    <property type="entry name" value="Epsilon subunit of F1F0-ATP synthase N-terminal domain"/>
    <property type="match status" value="1"/>
</dbReference>
<proteinExistence type="inferred from homology"/>
<protein>
    <recommendedName>
        <fullName evidence="1">ATP synthase epsilon chain</fullName>
    </recommendedName>
    <alternativeName>
        <fullName evidence="1">ATP synthase F1 sector epsilon subunit</fullName>
    </alternativeName>
    <alternativeName>
        <fullName evidence="1">F-ATPase epsilon subunit</fullName>
    </alternativeName>
</protein>
<organism>
    <name type="scientific">Nitratiruptor sp. (strain SB155-2)</name>
    <dbReference type="NCBI Taxonomy" id="387092"/>
    <lineage>
        <taxon>Bacteria</taxon>
        <taxon>Pseudomonadati</taxon>
        <taxon>Campylobacterota</taxon>
        <taxon>Epsilonproteobacteria</taxon>
        <taxon>Nautiliales</taxon>
        <taxon>Nitratiruptoraceae</taxon>
        <taxon>Nitratiruptor</taxon>
    </lineage>
</organism>
<gene>
    <name evidence="1" type="primary">atpC</name>
    <name type="ordered locus">NIS_1219</name>
</gene>
<reference key="1">
    <citation type="journal article" date="2007" name="Proc. Natl. Acad. Sci. U.S.A.">
        <title>Deep-sea vent epsilon-proteobacterial genomes provide insights into emergence of pathogens.</title>
        <authorList>
            <person name="Nakagawa S."/>
            <person name="Takaki Y."/>
            <person name="Shimamura S."/>
            <person name="Reysenbach A.-L."/>
            <person name="Takai K."/>
            <person name="Horikoshi K."/>
        </authorList>
    </citation>
    <scope>NUCLEOTIDE SEQUENCE [LARGE SCALE GENOMIC DNA]</scope>
    <source>
        <strain>SB155-2</strain>
    </source>
</reference>
<comment type="function">
    <text evidence="1">Produces ATP from ADP in the presence of a proton gradient across the membrane.</text>
</comment>
<comment type="subunit">
    <text evidence="1">F-type ATPases have 2 components, CF(1) - the catalytic core - and CF(0) - the membrane proton channel. CF(1) has five subunits: alpha(3), beta(3), gamma(1), delta(1), epsilon(1). CF(0) has three main subunits: a, b and c.</text>
</comment>
<comment type="subcellular location">
    <subcellularLocation>
        <location evidence="1">Cell inner membrane</location>
        <topology evidence="1">Peripheral membrane protein</topology>
    </subcellularLocation>
</comment>
<comment type="similarity">
    <text evidence="1">Belongs to the ATPase epsilon chain family.</text>
</comment>
<accession>A6Q4B9</accession>
<feature type="chain" id="PRO_1000056513" description="ATP synthase epsilon chain">
    <location>
        <begin position="1"/>
        <end position="129"/>
    </location>
</feature>
<evidence type="ECO:0000255" key="1">
    <source>
        <dbReference type="HAMAP-Rule" id="MF_00530"/>
    </source>
</evidence>
<sequence length="129" mass="13772">MDTLKLEIVTPEGLIFQGDVKSVTFPGEEGEFGVLPKHASLLSLLKPGVIEIELPDGKKESIVINWGHVNVSENQATALVEGAVPLEGTTESEIAKKIEEAKKLIESASENKAALATVEARIEKAAKIV</sequence>